<gene>
    <name evidence="7" type="primary">B3GALT4</name>
    <name type="synonym">GALT4</name>
</gene>
<keyword id="KW-0325">Glycoprotein</keyword>
<keyword id="KW-0328">Glycosyltransferase</keyword>
<keyword id="KW-0333">Golgi apparatus</keyword>
<keyword id="KW-0443">Lipid metabolism</keyword>
<keyword id="KW-0472">Membrane</keyword>
<keyword id="KW-1267">Proteomics identification</keyword>
<keyword id="KW-1185">Reference proteome</keyword>
<keyword id="KW-0735">Signal-anchor</keyword>
<keyword id="KW-0808">Transferase</keyword>
<keyword id="KW-0812">Transmembrane</keyword>
<keyword id="KW-1133">Transmembrane helix</keyword>
<name>B3GT4_HUMAN</name>
<protein>
    <recommendedName>
        <fullName evidence="6">Beta-1,3-galactosyltransferase 4</fullName>
        <shortName>Beta-1,3-GalTase 4</shortName>
        <shortName>Beta3Gal-T4</shortName>
        <shortName>Beta3GalT4</shortName>
        <shortName>GalT4</shortName>
        <shortName>b3Gal-T4</shortName>
        <ecNumber evidence="5">2.4.1.62</ecNumber>
    </recommendedName>
    <alternativeName>
        <fullName>Gal-T2</fullName>
    </alternativeName>
    <alternativeName>
        <fullName>Ganglioside galactosyltransferase</fullName>
    </alternativeName>
    <alternativeName>
        <fullName>UDP-galactose:beta-N-acetyl-galactosamine-beta-1,3-galactosyltransferase</fullName>
    </alternativeName>
</protein>
<evidence type="ECO:0000250" key="1">
    <source>
        <dbReference type="UniProtKB" id="O88178"/>
    </source>
</evidence>
<evidence type="ECO:0000250" key="2">
    <source>
        <dbReference type="UniProtKB" id="Q9Z0F0"/>
    </source>
</evidence>
<evidence type="ECO:0000255" key="3"/>
<evidence type="ECO:0000269" key="4">
    <source>
    </source>
</evidence>
<evidence type="ECO:0000269" key="5">
    <source>
    </source>
</evidence>
<evidence type="ECO:0000305" key="6"/>
<evidence type="ECO:0000312" key="7">
    <source>
        <dbReference type="HGNC" id="HGNC:919"/>
    </source>
</evidence>
<proteinExistence type="evidence at protein level"/>
<dbReference type="EC" id="2.4.1.62" evidence="5"/>
<dbReference type="EMBL" id="Y15061">
    <property type="protein sequence ID" value="CAA75345.1"/>
    <property type="molecule type" value="mRNA"/>
</dbReference>
<dbReference type="EMBL" id="AL031228">
    <property type="protein sequence ID" value="CAA20230.1"/>
    <property type="molecule type" value="Genomic_DNA"/>
</dbReference>
<dbReference type="EMBL" id="AB026730">
    <property type="protein sequence ID" value="BAA88988.1"/>
    <property type="molecule type" value="mRNA"/>
</dbReference>
<dbReference type="EMBL" id="BC032574">
    <property type="protein sequence ID" value="AAH32574.1"/>
    <property type="molecule type" value="mRNA"/>
</dbReference>
<dbReference type="CCDS" id="CCDS34425.1"/>
<dbReference type="RefSeq" id="NP_003773.1">
    <property type="nucleotide sequence ID" value="NM_003782.4"/>
</dbReference>
<dbReference type="SMR" id="O96024"/>
<dbReference type="BioGRID" id="114248">
    <property type="interactions" value="41"/>
</dbReference>
<dbReference type="FunCoup" id="O96024">
    <property type="interactions" value="138"/>
</dbReference>
<dbReference type="IntAct" id="O96024">
    <property type="interactions" value="32"/>
</dbReference>
<dbReference type="MINT" id="O96024"/>
<dbReference type="STRING" id="9606.ENSP00000390784"/>
<dbReference type="SwissLipids" id="SLP:000000772"/>
<dbReference type="CAZy" id="GT31">
    <property type="family name" value="Glycosyltransferase Family 31"/>
</dbReference>
<dbReference type="GlyCosmos" id="O96024">
    <property type="glycosylation" value="1 site, No reported glycans"/>
</dbReference>
<dbReference type="GlyGen" id="O96024">
    <property type="glycosylation" value="1 site"/>
</dbReference>
<dbReference type="iPTMnet" id="O96024"/>
<dbReference type="PhosphoSitePlus" id="O96024"/>
<dbReference type="BioMuta" id="B3GALT4"/>
<dbReference type="jPOST" id="O96024"/>
<dbReference type="MassIVE" id="O96024"/>
<dbReference type="PaxDb" id="9606-ENSP00000390784"/>
<dbReference type="PeptideAtlas" id="O96024"/>
<dbReference type="ProteomicsDB" id="51215"/>
<dbReference type="Antibodypedia" id="29042">
    <property type="antibodies" value="118 antibodies from 25 providers"/>
</dbReference>
<dbReference type="DNASU" id="8705"/>
<dbReference type="Ensembl" id="ENST00000383209.6">
    <property type="protein sequence ID" value="ENSP00000372696.5"/>
    <property type="gene ID" value="ENSG00000206285.6"/>
</dbReference>
<dbReference type="Ensembl" id="ENST00000415322.4">
    <property type="protein sequence ID" value="ENSP00000394876.3"/>
    <property type="gene ID" value="ENSG00000226936.4"/>
</dbReference>
<dbReference type="Ensembl" id="ENST00000419471.4">
    <property type="protein sequence ID" value="ENSP00000398660.3"/>
    <property type="gene ID" value="ENSG00000235155.4"/>
</dbReference>
<dbReference type="Ensembl" id="ENST00000430971.4">
    <property type="protein sequence ID" value="ENSP00000414880.3"/>
    <property type="gene ID" value="ENSG00000236802.4"/>
</dbReference>
<dbReference type="Ensembl" id="ENST00000451237.3">
    <property type="protein sequence ID" value="ENSP00000390784.1"/>
    <property type="gene ID" value="ENSG00000235863.4"/>
</dbReference>
<dbReference type="GeneID" id="8705"/>
<dbReference type="KEGG" id="hsa:8705"/>
<dbReference type="MANE-Select" id="ENST00000451237.3">
    <property type="protein sequence ID" value="ENSP00000390784.1"/>
    <property type="RefSeq nucleotide sequence ID" value="NM_003782.4"/>
    <property type="RefSeq protein sequence ID" value="NP_003773.1"/>
</dbReference>
<dbReference type="AGR" id="HGNC:919"/>
<dbReference type="CTD" id="8705"/>
<dbReference type="DisGeNET" id="8705"/>
<dbReference type="GeneCards" id="B3GALT4"/>
<dbReference type="HGNC" id="HGNC:919">
    <property type="gene designation" value="B3GALT4"/>
</dbReference>
<dbReference type="HPA" id="ENSG00000235863">
    <property type="expression patterns" value="Tissue enhanced (testis)"/>
</dbReference>
<dbReference type="MIM" id="603095">
    <property type="type" value="gene"/>
</dbReference>
<dbReference type="neXtProt" id="NX_O96024"/>
<dbReference type="OpenTargets" id="ENSG00000235863"/>
<dbReference type="PharmGKB" id="PA25212"/>
<dbReference type="VEuPathDB" id="HostDB:ENSG00000235863"/>
<dbReference type="eggNOG" id="KOG2287">
    <property type="taxonomic scope" value="Eukaryota"/>
</dbReference>
<dbReference type="GeneTree" id="ENSGT00940000161798"/>
<dbReference type="HOGENOM" id="CLU_036849_1_0_1"/>
<dbReference type="InParanoid" id="O96024"/>
<dbReference type="OMA" id="SHKLDPW"/>
<dbReference type="OrthoDB" id="2139606at2759"/>
<dbReference type="PAN-GO" id="O96024">
    <property type="GO annotations" value="2 GO annotations based on evolutionary models"/>
</dbReference>
<dbReference type="PhylomeDB" id="O96024"/>
<dbReference type="TreeFam" id="TF318639"/>
<dbReference type="BioCyc" id="MetaCyc:HS00059-MONOMER"/>
<dbReference type="BRENDA" id="2.4.1.62">
    <property type="organism ID" value="2681"/>
</dbReference>
<dbReference type="PathwayCommons" id="O96024"/>
<dbReference type="Reactome" id="R-HSA-9037629">
    <property type="pathway name" value="Lewis blood group biosynthesis"/>
</dbReference>
<dbReference type="Reactome" id="R-HSA-9840309">
    <property type="pathway name" value="Glycosphingolipid biosynthesis"/>
</dbReference>
<dbReference type="SignaLink" id="O96024"/>
<dbReference type="UniPathway" id="UPA00378"/>
<dbReference type="BioGRID-ORCS" id="8705">
    <property type="hits" value="24 hits in 1146 CRISPR screens"/>
</dbReference>
<dbReference type="ChiTaRS" id="B3GALT4">
    <property type="organism name" value="human"/>
</dbReference>
<dbReference type="GeneWiki" id="B3GALT4"/>
<dbReference type="GenomeRNAi" id="8705"/>
<dbReference type="Pharos" id="O96024">
    <property type="development level" value="Tbio"/>
</dbReference>
<dbReference type="PRO" id="PR:O96024"/>
<dbReference type="Proteomes" id="UP000005640">
    <property type="component" value="Chromosome 6"/>
</dbReference>
<dbReference type="RNAct" id="O96024">
    <property type="molecule type" value="protein"/>
</dbReference>
<dbReference type="Bgee" id="ENSG00000235863">
    <property type="expression patterns" value="Expressed in lower esophagus mucosa and 96 other cell types or tissues"/>
</dbReference>
<dbReference type="ExpressionAtlas" id="O96024">
    <property type="expression patterns" value="baseline and differential"/>
</dbReference>
<dbReference type="GO" id="GO:0000139">
    <property type="term" value="C:Golgi membrane"/>
    <property type="evidence" value="ECO:0000318"/>
    <property type="project" value="GO_Central"/>
</dbReference>
<dbReference type="GO" id="GO:0047915">
    <property type="term" value="F:ganglioside galactosyltransferase activity"/>
    <property type="evidence" value="ECO:0007669"/>
    <property type="project" value="UniProtKB-EC"/>
</dbReference>
<dbReference type="GO" id="GO:0016757">
    <property type="term" value="F:glycosyltransferase activity"/>
    <property type="evidence" value="ECO:0000318"/>
    <property type="project" value="GO_Central"/>
</dbReference>
<dbReference type="GO" id="GO:0008499">
    <property type="term" value="F:N-acetyl-beta-D-glucosaminide beta-(1,3)-galactosyltransferase activity"/>
    <property type="evidence" value="ECO:0000314"/>
    <property type="project" value="BHF-UCL"/>
</dbReference>
<dbReference type="GO" id="GO:0001574">
    <property type="term" value="P:ganglioside biosynthetic process"/>
    <property type="evidence" value="ECO:0000314"/>
    <property type="project" value="BHF-UCL"/>
</dbReference>
<dbReference type="GO" id="GO:0006688">
    <property type="term" value="P:glycosphingolipid biosynthetic process"/>
    <property type="evidence" value="ECO:0000304"/>
    <property type="project" value="Reactome"/>
</dbReference>
<dbReference type="GO" id="GO:0009312">
    <property type="term" value="P:oligosaccharide biosynthetic process"/>
    <property type="evidence" value="ECO:0000304"/>
    <property type="project" value="Reactome"/>
</dbReference>
<dbReference type="GO" id="GO:0006493">
    <property type="term" value="P:protein O-linked glycosylation"/>
    <property type="evidence" value="ECO:0000318"/>
    <property type="project" value="GO_Central"/>
</dbReference>
<dbReference type="FunFam" id="3.90.550.50:FF:000050">
    <property type="entry name" value="Beta-1,3-galactosyltransferase 4"/>
    <property type="match status" value="1"/>
</dbReference>
<dbReference type="Gene3D" id="3.90.550.50">
    <property type="match status" value="1"/>
</dbReference>
<dbReference type="InterPro" id="IPR002659">
    <property type="entry name" value="Glyco_trans_31"/>
</dbReference>
<dbReference type="PANTHER" id="PTHR11214:SF378">
    <property type="entry name" value="BETA-1,3-GALACTOSYLTRANSFERASE 4"/>
    <property type="match status" value="1"/>
</dbReference>
<dbReference type="PANTHER" id="PTHR11214">
    <property type="entry name" value="BETA-1,3-N-ACETYLGLUCOSAMINYLTRANSFERASE"/>
    <property type="match status" value="1"/>
</dbReference>
<dbReference type="Pfam" id="PF01762">
    <property type="entry name" value="Galactosyl_T"/>
    <property type="match status" value="1"/>
</dbReference>
<feature type="chain" id="PRO_0000219160" description="Beta-1,3-galactosyltransferase 4">
    <location>
        <begin position="1"/>
        <end position="378"/>
    </location>
</feature>
<feature type="topological domain" description="Cytoplasmic" evidence="3">
    <location>
        <begin position="1"/>
        <end position="8"/>
    </location>
</feature>
<feature type="transmembrane region" description="Helical; Signal-anchor for type II membrane protein" evidence="3">
    <location>
        <begin position="9"/>
        <end position="19"/>
    </location>
</feature>
<feature type="topological domain" description="Lumenal" evidence="3">
    <location>
        <begin position="20"/>
        <end position="378"/>
    </location>
</feature>
<feature type="glycosylation site" description="N-linked (GlcNAc...) asparagine" evidence="3">
    <location>
        <position position="149"/>
    </location>
</feature>
<accession>O96024</accession>
<comment type="function">
    <text evidence="5">Involved in GM1/GD1B/GA1 ganglioside biosynthesis.</text>
</comment>
<comment type="catalytic activity">
    <reaction evidence="5">
        <text>a ganglioside GM2 (d18:1(4E)) + UDP-alpha-D-galactose = a ganglioside GM1 (d18:1(4E)) + UDP + H(+)</text>
        <dbReference type="Rhea" id="RHEA:16773"/>
        <dbReference type="ChEBI" id="CHEBI:15378"/>
        <dbReference type="ChEBI" id="CHEBI:58223"/>
        <dbReference type="ChEBI" id="CHEBI:66914"/>
        <dbReference type="ChEBI" id="CHEBI:71502"/>
        <dbReference type="ChEBI" id="CHEBI:77709"/>
        <dbReference type="EC" id="2.4.1.62"/>
    </reaction>
    <physiologicalReaction direction="left-to-right" evidence="5">
        <dbReference type="Rhea" id="RHEA:16774"/>
    </physiologicalReaction>
</comment>
<comment type="catalytic activity">
    <reaction evidence="2">
        <text>a ganglioside GM2 + UDP-alpha-D-galactose = a ganglioside GM1 + UDP + H(+)</text>
        <dbReference type="Rhea" id="RHEA:48280"/>
        <dbReference type="ChEBI" id="CHEBI:15378"/>
        <dbReference type="ChEBI" id="CHEBI:58223"/>
        <dbReference type="ChEBI" id="CHEBI:66914"/>
        <dbReference type="ChEBI" id="CHEBI:79218"/>
        <dbReference type="ChEBI" id="CHEBI:82639"/>
    </reaction>
    <physiologicalReaction direction="left-to-right" evidence="2">
        <dbReference type="Rhea" id="RHEA:48281"/>
    </physiologicalReaction>
</comment>
<comment type="catalytic activity">
    <reaction evidence="1">
        <text>a ganglioside GD2 (d18:1(4E)) + UDP-alpha-D-galactose = a ganglioside GD1b (d18:1(4E)) + UDP + H(+)</text>
        <dbReference type="Rhea" id="RHEA:47568"/>
        <dbReference type="ChEBI" id="CHEBI:15378"/>
        <dbReference type="ChEBI" id="CHEBI:58223"/>
        <dbReference type="ChEBI" id="CHEBI:66914"/>
        <dbReference type="ChEBI" id="CHEBI:78542"/>
        <dbReference type="ChEBI" id="CHEBI:87785"/>
    </reaction>
    <physiologicalReaction direction="left-to-right" evidence="1">
        <dbReference type="Rhea" id="RHEA:47569"/>
    </physiologicalReaction>
</comment>
<comment type="catalytic activity">
    <reaction evidence="1">
        <text>a ganglioside GA2 (d18:1(4E)) + UDP-alpha-D-galactose = a ganglioside GA1 (d18:1(4E)) + UDP + H(+)</text>
        <dbReference type="Rhea" id="RHEA:41960"/>
        <dbReference type="ChEBI" id="CHEBI:15378"/>
        <dbReference type="ChEBI" id="CHEBI:27731"/>
        <dbReference type="ChEBI" id="CHEBI:27938"/>
        <dbReference type="ChEBI" id="CHEBI:58223"/>
        <dbReference type="ChEBI" id="CHEBI:66914"/>
    </reaction>
    <physiologicalReaction direction="left-to-right" evidence="1">
        <dbReference type="Rhea" id="RHEA:41961"/>
    </physiologicalReaction>
</comment>
<comment type="pathway">
    <text>Protein modification; protein glycosylation.</text>
</comment>
<comment type="subcellular location">
    <subcellularLocation>
        <location evidence="2">Golgi apparatus membrane</location>
        <topology evidence="3">Single-pass type II membrane protein</topology>
    </subcellularLocation>
</comment>
<comment type="tissue specificity">
    <text evidence="4 5">Highly expressed in heart, skeletal muscle and pancreas and, to a lesser extent, in brain, placenta, kidney, liver and lung.</text>
</comment>
<comment type="similarity">
    <text evidence="6">Belongs to the glycosyltransferase 31 family.</text>
</comment>
<comment type="online information" name="Functional Glycomics Gateway - GTase">
    <link uri="http://www.functionalglycomics.org/glycomics/molecule/jsp/glycoEnzyme/viewGlycoEnzyme.jsp?gbpId=gt_hum_431"/>
    <text>Beta-1,3-galactosyltransferase 4</text>
</comment>
<organism>
    <name type="scientific">Homo sapiens</name>
    <name type="common">Human</name>
    <dbReference type="NCBI Taxonomy" id="9606"/>
    <lineage>
        <taxon>Eukaryota</taxon>
        <taxon>Metazoa</taxon>
        <taxon>Chordata</taxon>
        <taxon>Craniata</taxon>
        <taxon>Vertebrata</taxon>
        <taxon>Euteleostomi</taxon>
        <taxon>Mammalia</taxon>
        <taxon>Eutheria</taxon>
        <taxon>Euarchontoglires</taxon>
        <taxon>Primates</taxon>
        <taxon>Haplorrhini</taxon>
        <taxon>Catarrhini</taxon>
        <taxon>Hominidae</taxon>
        <taxon>Homo</taxon>
    </lineage>
</organism>
<sequence>MQLRLFRRLLLAALLLVIVWTLFGPSGLGEELLSLSLASLLPAPASPGPPLALPRLLIPNQEACSGPGAPPFLLILVCTAPENLNQRNAIRASWGGLREARGLRVQTLFLLGEPNAQHPVWGSQGSDLASESAAQGDILQAAFQDSYRNLTLKTLSGLNWAEKHCPMARYVLKTDDDVYVNVPELVSELVLRGGRWGQWERSTEPQREAEQEGGQVLHSEEVPLLYLGRVHWRVNPSRTPGGRHRVSEEQWPHTWGPFPPYASGTGYVLSASAVQLILKVASRAPLLPLEDVFVGVSARRGGLAPTQCVKLAGATHYPLDRCCYGKFLLTSHRLDPWKMQEAWKLVGGSDGERTAPFCSWFQGVLGILRCRAIAWLQS</sequence>
<reference key="1">
    <citation type="journal article" date="1998" name="J. Biol. Chem.">
        <title>A family of human beta3-galactosyltransferases. Characterization of four members of a UDP-galactose:beta-N-acetyl-glucosamine/beta-N-acetyl-galactosamine beta-1,3-galactosyltransferase family.</title>
        <authorList>
            <person name="Amado M."/>
            <person name="Almeida R."/>
            <person name="Carneiro F."/>
            <person name="Levery S.B."/>
            <person name="Holmes E.H."/>
            <person name="Nomoto M."/>
            <person name="Hollingsworth M.A."/>
            <person name="Hassan H."/>
            <person name="Schwientek T."/>
            <person name="Nielsen P.A."/>
            <person name="Bennett E.P."/>
            <person name="Clausen H."/>
        </authorList>
    </citation>
    <scope>NUCLEOTIDE SEQUENCE [MRNA]</scope>
    <scope>FUNCTION</scope>
    <scope>CATALYTIC ACTIVITY</scope>
    <scope>TISSUE SPECIFICITY</scope>
    <source>
        <tissue>Fetal brain</tissue>
    </source>
</reference>
<reference key="2">
    <citation type="journal article" date="2000" name="Immunogenetics">
        <title>The beta 1,3-galactosyltransferase-4 (b3Gal-T4) gene is located in the centromeric segment of the human MHC class II region.</title>
        <authorList>
            <person name="Shiina T."/>
            <person name="Kikkawa E."/>
            <person name="Iwasaki H."/>
            <person name="Kaneko M."/>
            <person name="Narimatsu H."/>
            <person name="Sasaki K."/>
            <person name="Bahram S."/>
            <person name="Inoko H."/>
        </authorList>
    </citation>
    <scope>NUCLEOTIDE SEQUENCE [MRNA]</scope>
    <scope>TISSUE SPECIFICITY</scope>
</reference>
<reference key="3">
    <citation type="journal article" date="2003" name="Nature">
        <title>The DNA sequence and analysis of human chromosome 6.</title>
        <authorList>
            <person name="Mungall A.J."/>
            <person name="Palmer S.A."/>
            <person name="Sims S.K."/>
            <person name="Edwards C.A."/>
            <person name="Ashurst J.L."/>
            <person name="Wilming L."/>
            <person name="Jones M.C."/>
            <person name="Horton R."/>
            <person name="Hunt S.E."/>
            <person name="Scott C.E."/>
            <person name="Gilbert J.G.R."/>
            <person name="Clamp M.E."/>
            <person name="Bethel G."/>
            <person name="Milne S."/>
            <person name="Ainscough R."/>
            <person name="Almeida J.P."/>
            <person name="Ambrose K.D."/>
            <person name="Andrews T.D."/>
            <person name="Ashwell R.I.S."/>
            <person name="Babbage A.K."/>
            <person name="Bagguley C.L."/>
            <person name="Bailey J."/>
            <person name="Banerjee R."/>
            <person name="Barker D.J."/>
            <person name="Barlow K.F."/>
            <person name="Bates K."/>
            <person name="Beare D.M."/>
            <person name="Beasley H."/>
            <person name="Beasley O."/>
            <person name="Bird C.P."/>
            <person name="Blakey S.E."/>
            <person name="Bray-Allen S."/>
            <person name="Brook J."/>
            <person name="Brown A.J."/>
            <person name="Brown J.Y."/>
            <person name="Burford D.C."/>
            <person name="Burrill W."/>
            <person name="Burton J."/>
            <person name="Carder C."/>
            <person name="Carter N.P."/>
            <person name="Chapman J.C."/>
            <person name="Clark S.Y."/>
            <person name="Clark G."/>
            <person name="Clee C.M."/>
            <person name="Clegg S."/>
            <person name="Cobley V."/>
            <person name="Collier R.E."/>
            <person name="Collins J.E."/>
            <person name="Colman L.K."/>
            <person name="Corby N.R."/>
            <person name="Coville G.J."/>
            <person name="Culley K.M."/>
            <person name="Dhami P."/>
            <person name="Davies J."/>
            <person name="Dunn M."/>
            <person name="Earthrowl M.E."/>
            <person name="Ellington A.E."/>
            <person name="Evans K.A."/>
            <person name="Faulkner L."/>
            <person name="Francis M.D."/>
            <person name="Frankish A."/>
            <person name="Frankland J."/>
            <person name="French L."/>
            <person name="Garner P."/>
            <person name="Garnett J."/>
            <person name="Ghori M.J."/>
            <person name="Gilby L.M."/>
            <person name="Gillson C.J."/>
            <person name="Glithero R.J."/>
            <person name="Grafham D.V."/>
            <person name="Grant M."/>
            <person name="Gribble S."/>
            <person name="Griffiths C."/>
            <person name="Griffiths M.N.D."/>
            <person name="Hall R."/>
            <person name="Halls K.S."/>
            <person name="Hammond S."/>
            <person name="Harley J.L."/>
            <person name="Hart E.A."/>
            <person name="Heath P.D."/>
            <person name="Heathcott R."/>
            <person name="Holmes S.J."/>
            <person name="Howden P.J."/>
            <person name="Howe K.L."/>
            <person name="Howell G.R."/>
            <person name="Huckle E."/>
            <person name="Humphray S.J."/>
            <person name="Humphries M.D."/>
            <person name="Hunt A.R."/>
            <person name="Johnson C.M."/>
            <person name="Joy A.A."/>
            <person name="Kay M."/>
            <person name="Keenan S.J."/>
            <person name="Kimberley A.M."/>
            <person name="King A."/>
            <person name="Laird G.K."/>
            <person name="Langford C."/>
            <person name="Lawlor S."/>
            <person name="Leongamornlert D.A."/>
            <person name="Leversha M."/>
            <person name="Lloyd C.R."/>
            <person name="Lloyd D.M."/>
            <person name="Loveland J.E."/>
            <person name="Lovell J."/>
            <person name="Martin S."/>
            <person name="Mashreghi-Mohammadi M."/>
            <person name="Maslen G.L."/>
            <person name="Matthews L."/>
            <person name="McCann O.T."/>
            <person name="McLaren S.J."/>
            <person name="McLay K."/>
            <person name="McMurray A."/>
            <person name="Moore M.J.F."/>
            <person name="Mullikin J.C."/>
            <person name="Niblett D."/>
            <person name="Nickerson T."/>
            <person name="Novik K.L."/>
            <person name="Oliver K."/>
            <person name="Overton-Larty E.K."/>
            <person name="Parker A."/>
            <person name="Patel R."/>
            <person name="Pearce A.V."/>
            <person name="Peck A.I."/>
            <person name="Phillimore B.J.C.T."/>
            <person name="Phillips S."/>
            <person name="Plumb R.W."/>
            <person name="Porter K.M."/>
            <person name="Ramsey Y."/>
            <person name="Ranby S.A."/>
            <person name="Rice C.M."/>
            <person name="Ross M.T."/>
            <person name="Searle S.M."/>
            <person name="Sehra H.K."/>
            <person name="Sheridan E."/>
            <person name="Skuce C.D."/>
            <person name="Smith S."/>
            <person name="Smith M."/>
            <person name="Spraggon L."/>
            <person name="Squares S.L."/>
            <person name="Steward C.A."/>
            <person name="Sycamore N."/>
            <person name="Tamlyn-Hall G."/>
            <person name="Tester J."/>
            <person name="Theaker A.J."/>
            <person name="Thomas D.W."/>
            <person name="Thorpe A."/>
            <person name="Tracey A."/>
            <person name="Tromans A."/>
            <person name="Tubby B."/>
            <person name="Wall M."/>
            <person name="Wallis J.M."/>
            <person name="West A.P."/>
            <person name="White S.S."/>
            <person name="Whitehead S.L."/>
            <person name="Whittaker H."/>
            <person name="Wild A."/>
            <person name="Willey D.J."/>
            <person name="Wilmer T.E."/>
            <person name="Wood J.M."/>
            <person name="Wray P.W."/>
            <person name="Wyatt J.C."/>
            <person name="Young L."/>
            <person name="Younger R.M."/>
            <person name="Bentley D.R."/>
            <person name="Coulson A."/>
            <person name="Durbin R.M."/>
            <person name="Hubbard T."/>
            <person name="Sulston J.E."/>
            <person name="Dunham I."/>
            <person name="Rogers J."/>
            <person name="Beck S."/>
        </authorList>
    </citation>
    <scope>NUCLEOTIDE SEQUENCE [LARGE SCALE GENOMIC DNA]</scope>
</reference>
<reference key="4">
    <citation type="journal article" date="2004" name="Genome Res.">
        <title>The status, quality, and expansion of the NIH full-length cDNA project: the Mammalian Gene Collection (MGC).</title>
        <authorList>
            <consortium name="The MGC Project Team"/>
        </authorList>
    </citation>
    <scope>NUCLEOTIDE SEQUENCE [LARGE SCALE MRNA]</scope>
    <source>
        <tissue>Fetal brain</tissue>
    </source>
</reference>